<organism>
    <name type="scientific">Yersinia pestis</name>
    <dbReference type="NCBI Taxonomy" id="632"/>
    <lineage>
        <taxon>Bacteria</taxon>
        <taxon>Pseudomonadati</taxon>
        <taxon>Pseudomonadota</taxon>
        <taxon>Gammaproteobacteria</taxon>
        <taxon>Enterobacterales</taxon>
        <taxon>Yersiniaceae</taxon>
        <taxon>Yersinia</taxon>
    </lineage>
</organism>
<comment type="function">
    <text evidence="1">DEAD-box RNA helicase involved in RNA degradation. Has RNA-dependent ATPase activity and unwinds double-stranded RNA.</text>
</comment>
<comment type="catalytic activity">
    <reaction evidence="1">
        <text>ATP + H2O = ADP + phosphate + H(+)</text>
        <dbReference type="Rhea" id="RHEA:13065"/>
        <dbReference type="ChEBI" id="CHEBI:15377"/>
        <dbReference type="ChEBI" id="CHEBI:15378"/>
        <dbReference type="ChEBI" id="CHEBI:30616"/>
        <dbReference type="ChEBI" id="CHEBI:43474"/>
        <dbReference type="ChEBI" id="CHEBI:456216"/>
        <dbReference type="EC" id="3.6.4.13"/>
    </reaction>
</comment>
<comment type="subunit">
    <text evidence="1">Component of the RNA degradosome, which is a multiprotein complex involved in RNA processing and mRNA degradation.</text>
</comment>
<comment type="subcellular location">
    <subcellularLocation>
        <location evidence="1">Cytoplasm</location>
    </subcellularLocation>
</comment>
<comment type="similarity">
    <text evidence="1">Belongs to the DEAD box helicase family. RhlB subfamily.</text>
</comment>
<gene>
    <name evidence="1" type="primary">rhlB</name>
    <name type="ordered locus">YPO3869</name>
    <name type="ordered locus">y0359</name>
    <name type="ordered locus">YP_3176</name>
</gene>
<name>RHLB_YERPE</name>
<evidence type="ECO:0000255" key="1">
    <source>
        <dbReference type="HAMAP-Rule" id="MF_00661"/>
    </source>
</evidence>
<evidence type="ECO:0000256" key="2">
    <source>
        <dbReference type="SAM" id="MobiDB-lite"/>
    </source>
</evidence>
<evidence type="ECO:0000305" key="3"/>
<feature type="chain" id="PRO_0000200795" description="ATP-dependent RNA helicase RhlB">
    <location>
        <begin position="1"/>
        <end position="428"/>
    </location>
</feature>
<feature type="domain" description="Helicase ATP-binding" evidence="1">
    <location>
        <begin position="40"/>
        <end position="219"/>
    </location>
</feature>
<feature type="domain" description="Helicase C-terminal" evidence="1">
    <location>
        <begin position="245"/>
        <end position="390"/>
    </location>
</feature>
<feature type="region of interest" description="Disordered" evidence="2">
    <location>
        <begin position="394"/>
        <end position="428"/>
    </location>
</feature>
<feature type="short sequence motif" description="Q motif">
    <location>
        <begin position="9"/>
        <end position="37"/>
    </location>
</feature>
<feature type="short sequence motif" description="DEAD box">
    <location>
        <begin position="165"/>
        <end position="168"/>
    </location>
</feature>
<feature type="binding site" evidence="1">
    <location>
        <begin position="53"/>
        <end position="60"/>
    </location>
    <ligand>
        <name>ATP</name>
        <dbReference type="ChEBI" id="CHEBI:30616"/>
    </ligand>
</feature>
<feature type="sequence conflict" description="In Ref. 3." evidence="3" ref="3">
    <location>
        <begin position="409"/>
        <end position="414"/>
    </location>
</feature>
<proteinExistence type="inferred from homology"/>
<protein>
    <recommendedName>
        <fullName evidence="1">ATP-dependent RNA helicase RhlB</fullName>
        <ecNumber evidence="1">3.6.4.13</ecNumber>
    </recommendedName>
</protein>
<accession>Q8ZAD8</accession>
<accession>Q0WAE1</accession>
<dbReference type="EC" id="3.6.4.13" evidence="1"/>
<dbReference type="EMBL" id="AL590842">
    <property type="protein sequence ID" value="CAL22456.1"/>
    <property type="molecule type" value="Genomic_DNA"/>
</dbReference>
<dbReference type="EMBL" id="AE009952">
    <property type="protein sequence ID" value="AAM83948.1"/>
    <property type="molecule type" value="Genomic_DNA"/>
</dbReference>
<dbReference type="EMBL" id="AE017042">
    <property type="protein sequence ID" value="AAS63344.1"/>
    <property type="molecule type" value="Genomic_DNA"/>
</dbReference>
<dbReference type="PIR" id="AE0471">
    <property type="entry name" value="AE0471"/>
</dbReference>
<dbReference type="RefSeq" id="WP_002228177.1">
    <property type="nucleotide sequence ID" value="NZ_WUCM01000073.1"/>
</dbReference>
<dbReference type="RefSeq" id="YP_002348747.1">
    <property type="nucleotide sequence ID" value="NC_003143.1"/>
</dbReference>
<dbReference type="SMR" id="Q8ZAD8"/>
<dbReference type="STRING" id="214092.YPO3869"/>
<dbReference type="PaxDb" id="214092-YPO3869"/>
<dbReference type="DNASU" id="1145306"/>
<dbReference type="EnsemblBacteria" id="AAS63344">
    <property type="protein sequence ID" value="AAS63344"/>
    <property type="gene ID" value="YP_3176"/>
</dbReference>
<dbReference type="GeneID" id="96663646"/>
<dbReference type="KEGG" id="ype:YPO3869"/>
<dbReference type="KEGG" id="ypk:y0359"/>
<dbReference type="KEGG" id="ypm:YP_3176"/>
<dbReference type="PATRIC" id="fig|214092.21.peg.4396"/>
<dbReference type="eggNOG" id="COG0513">
    <property type="taxonomic scope" value="Bacteria"/>
</dbReference>
<dbReference type="HOGENOM" id="CLU_003041_1_3_6"/>
<dbReference type="OMA" id="TRFHDFK"/>
<dbReference type="OrthoDB" id="9805696at2"/>
<dbReference type="Proteomes" id="UP000000815">
    <property type="component" value="Chromosome"/>
</dbReference>
<dbReference type="Proteomes" id="UP000001019">
    <property type="component" value="Chromosome"/>
</dbReference>
<dbReference type="Proteomes" id="UP000002490">
    <property type="component" value="Chromosome"/>
</dbReference>
<dbReference type="GO" id="GO:0005829">
    <property type="term" value="C:cytosol"/>
    <property type="evidence" value="ECO:0000318"/>
    <property type="project" value="GO_Central"/>
</dbReference>
<dbReference type="GO" id="GO:0005524">
    <property type="term" value="F:ATP binding"/>
    <property type="evidence" value="ECO:0007669"/>
    <property type="project" value="UniProtKB-UniRule"/>
</dbReference>
<dbReference type="GO" id="GO:0016887">
    <property type="term" value="F:ATP hydrolysis activity"/>
    <property type="evidence" value="ECO:0007669"/>
    <property type="project" value="RHEA"/>
</dbReference>
<dbReference type="GO" id="GO:0003723">
    <property type="term" value="F:RNA binding"/>
    <property type="evidence" value="ECO:0007669"/>
    <property type="project" value="UniProtKB-UniRule"/>
</dbReference>
<dbReference type="GO" id="GO:0003724">
    <property type="term" value="F:RNA helicase activity"/>
    <property type="evidence" value="ECO:0000318"/>
    <property type="project" value="GO_Central"/>
</dbReference>
<dbReference type="GO" id="GO:0006401">
    <property type="term" value="P:RNA catabolic process"/>
    <property type="evidence" value="ECO:0007669"/>
    <property type="project" value="UniProtKB-UniRule"/>
</dbReference>
<dbReference type="CDD" id="cd00268">
    <property type="entry name" value="DEADc"/>
    <property type="match status" value="1"/>
</dbReference>
<dbReference type="CDD" id="cd18787">
    <property type="entry name" value="SF2_C_DEAD"/>
    <property type="match status" value="1"/>
</dbReference>
<dbReference type="FunFam" id="3.40.50.300:FF:000312">
    <property type="entry name" value="ATP-dependent RNA helicase RhlB"/>
    <property type="match status" value="1"/>
</dbReference>
<dbReference type="Gene3D" id="3.40.50.300">
    <property type="entry name" value="P-loop containing nucleotide triphosphate hydrolases"/>
    <property type="match status" value="2"/>
</dbReference>
<dbReference type="HAMAP" id="MF_00661">
    <property type="entry name" value="DEAD_helicase_RhlB"/>
    <property type="match status" value="1"/>
</dbReference>
<dbReference type="InterPro" id="IPR011545">
    <property type="entry name" value="DEAD/DEAH_box_helicase_dom"/>
</dbReference>
<dbReference type="InterPro" id="IPR050079">
    <property type="entry name" value="DEAD_box_RNA_helicase"/>
</dbReference>
<dbReference type="InterPro" id="IPR014001">
    <property type="entry name" value="Helicase_ATP-bd"/>
</dbReference>
<dbReference type="InterPro" id="IPR001650">
    <property type="entry name" value="Helicase_C-like"/>
</dbReference>
<dbReference type="InterPro" id="IPR027417">
    <property type="entry name" value="P-loop_NTPase"/>
</dbReference>
<dbReference type="InterPro" id="IPR000629">
    <property type="entry name" value="RNA-helicase_DEAD-box_CS"/>
</dbReference>
<dbReference type="InterPro" id="IPR023554">
    <property type="entry name" value="RNA_helicase_ATP-dep_RhlB"/>
</dbReference>
<dbReference type="InterPro" id="IPR014014">
    <property type="entry name" value="RNA_helicase_DEAD_Q_motif"/>
</dbReference>
<dbReference type="NCBIfam" id="NF003419">
    <property type="entry name" value="PRK04837.1"/>
    <property type="match status" value="1"/>
</dbReference>
<dbReference type="PANTHER" id="PTHR47959:SF10">
    <property type="entry name" value="ATP-DEPENDENT RNA HELICASE RHLB"/>
    <property type="match status" value="1"/>
</dbReference>
<dbReference type="PANTHER" id="PTHR47959">
    <property type="entry name" value="ATP-DEPENDENT RNA HELICASE RHLE-RELATED"/>
    <property type="match status" value="1"/>
</dbReference>
<dbReference type="Pfam" id="PF00270">
    <property type="entry name" value="DEAD"/>
    <property type="match status" value="1"/>
</dbReference>
<dbReference type="Pfam" id="PF00271">
    <property type="entry name" value="Helicase_C"/>
    <property type="match status" value="1"/>
</dbReference>
<dbReference type="SMART" id="SM00487">
    <property type="entry name" value="DEXDc"/>
    <property type="match status" value="1"/>
</dbReference>
<dbReference type="SMART" id="SM00490">
    <property type="entry name" value="HELICc"/>
    <property type="match status" value="1"/>
</dbReference>
<dbReference type="SUPFAM" id="SSF52540">
    <property type="entry name" value="P-loop containing nucleoside triphosphate hydrolases"/>
    <property type="match status" value="1"/>
</dbReference>
<dbReference type="PROSITE" id="PS00039">
    <property type="entry name" value="DEAD_ATP_HELICASE"/>
    <property type="match status" value="1"/>
</dbReference>
<dbReference type="PROSITE" id="PS51192">
    <property type="entry name" value="HELICASE_ATP_BIND_1"/>
    <property type="match status" value="1"/>
</dbReference>
<dbReference type="PROSITE" id="PS51194">
    <property type="entry name" value="HELICASE_CTER"/>
    <property type="match status" value="1"/>
</dbReference>
<dbReference type="PROSITE" id="PS51195">
    <property type="entry name" value="Q_MOTIF"/>
    <property type="match status" value="1"/>
</dbReference>
<sequence length="428" mass="47947">MSKTHLTEQKFSDFALHPLVVEALENKGFQYCTPIQALALPLTLSGRDVAGQAQTGTGKTLAFLASTFHYLLSHPAEEGRQTNQPRALIMAPTRELAVQIHSDAESLSQVTGLKLGLAYGGDGYDKQLKVLESGVDILIGTTGRLIDYAKQNYINLGAIQVVVLDEADRMYDLGFIKDIRWLFRRMPSVDKRLNMLFSATLSYRVRELAFEQMNNAEYVEVEPLQKTGHRIKEELFYPSNEEKMRLLQTLIEEEWPDRCIIFANTKHRCEEIWGHLAADGHRVGLLTGDVAQKKRLRILEDFTKGDLDILVATDVAARGLHIPLVTHVFNYDLPDDCEDYVHRIGRTGRAGESGHSISLACEEYALNLPAIETYTGHSIPVSKYNSDALLTDLPAPKRLARTRTGNGPRRNSAPRRSGAPRNNRKRPG</sequence>
<reference key="1">
    <citation type="journal article" date="2001" name="Nature">
        <title>Genome sequence of Yersinia pestis, the causative agent of plague.</title>
        <authorList>
            <person name="Parkhill J."/>
            <person name="Wren B.W."/>
            <person name="Thomson N.R."/>
            <person name="Titball R.W."/>
            <person name="Holden M.T.G."/>
            <person name="Prentice M.B."/>
            <person name="Sebaihia M."/>
            <person name="James K.D."/>
            <person name="Churcher C.M."/>
            <person name="Mungall K.L."/>
            <person name="Baker S."/>
            <person name="Basham D."/>
            <person name="Bentley S.D."/>
            <person name="Brooks K."/>
            <person name="Cerdeno-Tarraga A.-M."/>
            <person name="Chillingworth T."/>
            <person name="Cronin A."/>
            <person name="Davies R.M."/>
            <person name="Davis P."/>
            <person name="Dougan G."/>
            <person name="Feltwell T."/>
            <person name="Hamlin N."/>
            <person name="Holroyd S."/>
            <person name="Jagels K."/>
            <person name="Karlyshev A.V."/>
            <person name="Leather S."/>
            <person name="Moule S."/>
            <person name="Oyston P.C.F."/>
            <person name="Quail M.A."/>
            <person name="Rutherford K.M."/>
            <person name="Simmonds M."/>
            <person name="Skelton J."/>
            <person name="Stevens K."/>
            <person name="Whitehead S."/>
            <person name="Barrell B.G."/>
        </authorList>
    </citation>
    <scope>NUCLEOTIDE SEQUENCE [LARGE SCALE GENOMIC DNA]</scope>
    <source>
        <strain>CO-92 / Biovar Orientalis</strain>
    </source>
</reference>
<reference key="2">
    <citation type="journal article" date="2002" name="J. Bacteriol.">
        <title>Genome sequence of Yersinia pestis KIM.</title>
        <authorList>
            <person name="Deng W."/>
            <person name="Burland V."/>
            <person name="Plunkett G. III"/>
            <person name="Boutin A."/>
            <person name="Mayhew G.F."/>
            <person name="Liss P."/>
            <person name="Perna N.T."/>
            <person name="Rose D.J."/>
            <person name="Mau B."/>
            <person name="Zhou S."/>
            <person name="Schwartz D.C."/>
            <person name="Fetherston J.D."/>
            <person name="Lindler L.E."/>
            <person name="Brubaker R.R."/>
            <person name="Plano G.V."/>
            <person name="Straley S.C."/>
            <person name="McDonough K.A."/>
            <person name="Nilles M.L."/>
            <person name="Matson J.S."/>
            <person name="Blattner F.R."/>
            <person name="Perry R.D."/>
        </authorList>
    </citation>
    <scope>NUCLEOTIDE SEQUENCE [LARGE SCALE GENOMIC DNA]</scope>
    <source>
        <strain>KIM10+ / Biovar Mediaevalis</strain>
    </source>
</reference>
<reference key="3">
    <citation type="journal article" date="2004" name="DNA Res.">
        <title>Complete genome sequence of Yersinia pestis strain 91001, an isolate avirulent to humans.</title>
        <authorList>
            <person name="Song Y."/>
            <person name="Tong Z."/>
            <person name="Wang J."/>
            <person name="Wang L."/>
            <person name="Guo Z."/>
            <person name="Han Y."/>
            <person name="Zhang J."/>
            <person name="Pei D."/>
            <person name="Zhou D."/>
            <person name="Qin H."/>
            <person name="Pang X."/>
            <person name="Han Y."/>
            <person name="Zhai J."/>
            <person name="Li M."/>
            <person name="Cui B."/>
            <person name="Qi Z."/>
            <person name="Jin L."/>
            <person name="Dai R."/>
            <person name="Chen F."/>
            <person name="Li S."/>
            <person name="Ye C."/>
            <person name="Du Z."/>
            <person name="Lin W."/>
            <person name="Wang J."/>
            <person name="Yu J."/>
            <person name="Yang H."/>
            <person name="Wang J."/>
            <person name="Huang P."/>
            <person name="Yang R."/>
        </authorList>
    </citation>
    <scope>NUCLEOTIDE SEQUENCE [LARGE SCALE GENOMIC DNA]</scope>
    <source>
        <strain>91001 / Biovar Mediaevalis</strain>
    </source>
</reference>
<keyword id="KW-0067">ATP-binding</keyword>
<keyword id="KW-0963">Cytoplasm</keyword>
<keyword id="KW-0347">Helicase</keyword>
<keyword id="KW-0378">Hydrolase</keyword>
<keyword id="KW-0547">Nucleotide-binding</keyword>
<keyword id="KW-1185">Reference proteome</keyword>
<keyword id="KW-0694">RNA-binding</keyword>